<protein>
    <recommendedName>
        <fullName evidence="9">D-aspartate oxidase</fullName>
        <shortName evidence="8">DASOX</shortName>
        <shortName evidence="8">DASPO</shortName>
        <shortName evidence="8">DDO</shortName>
        <ecNumber evidence="1">1.4.3.1</ecNumber>
    </recommendedName>
    <alternativeName>
        <fullName evidence="7">CnDAO1</fullName>
    </alternativeName>
    <alternativeName>
        <fullName evidence="7">D-amino-acid oxidase 1</fullName>
    </alternativeName>
</protein>
<accession>J9VRT1</accession>
<comment type="function">
    <text evidence="1 3 6">Selectively catalyzes the oxidative deamination of acidic amino acids (By similarity). Protects the organism from the toxicity of D-amino acids (By similarity). Enables the organism to utilize D-amino acids as a source of nutrients (PubMed:26132227). Enables the organism to utilize D-aspartate and D-asparagine as a source of nitrogen (PubMed:26132227). May play a role in its interaction with the host (By similarity).</text>
</comment>
<comment type="catalytic activity">
    <reaction evidence="1">
        <text>D-aspartate + O2 + H2O = oxaloacetate + H2O2 + NH4(+)</text>
        <dbReference type="Rhea" id="RHEA:12512"/>
        <dbReference type="ChEBI" id="CHEBI:15377"/>
        <dbReference type="ChEBI" id="CHEBI:15379"/>
        <dbReference type="ChEBI" id="CHEBI:16240"/>
        <dbReference type="ChEBI" id="CHEBI:16452"/>
        <dbReference type="ChEBI" id="CHEBI:28938"/>
        <dbReference type="ChEBI" id="CHEBI:29990"/>
        <dbReference type="EC" id="1.4.3.1"/>
    </reaction>
    <physiologicalReaction direction="left-to-right" evidence="1">
        <dbReference type="Rhea" id="RHEA:12513"/>
    </physiologicalReaction>
</comment>
<comment type="cofactor">
    <cofactor evidence="3">
        <name>FAD</name>
        <dbReference type="ChEBI" id="CHEBI:57692"/>
    </cofactor>
</comment>
<comment type="subcellular location">
    <subcellularLocation>
        <location evidence="4">Membrane</location>
        <topology evidence="4">Single-pass membrane protein</topology>
    </subcellularLocation>
</comment>
<comment type="induction">
    <text evidence="6">Expression increases when grown on D-asparagine as nitrogen source.</text>
</comment>
<comment type="disruption phenotype">
    <text evidence="6">Decreases growth on D-aspartate and D-asparagine nitrogen sources.</text>
</comment>
<comment type="similarity">
    <text evidence="8">Belongs to the DAMOX/DASOX family.</text>
</comment>
<keyword id="KW-0274">FAD</keyword>
<keyword id="KW-0285">Flavoprotein</keyword>
<keyword id="KW-0325">Glycoprotein</keyword>
<keyword id="KW-0472">Membrane</keyword>
<keyword id="KW-0560">Oxidoreductase</keyword>
<keyword id="KW-0812">Transmembrane</keyword>
<keyword id="KW-1133">Transmembrane helix</keyword>
<dbReference type="EC" id="1.4.3.1" evidence="1"/>
<dbReference type="EMBL" id="CP003826">
    <property type="protein sequence ID" value="AFR96121.1"/>
    <property type="molecule type" value="Genomic_DNA"/>
</dbReference>
<dbReference type="RefSeq" id="XP_012050541.1">
    <property type="nucleotide sequence ID" value="XM_012195151.1"/>
</dbReference>
<dbReference type="SMR" id="J9VRT1"/>
<dbReference type="GeneID" id="23889091"/>
<dbReference type="KEGG" id="cng:CNAG_05802"/>
<dbReference type="VEuPathDB" id="FungiDB:CNAG_05802"/>
<dbReference type="HOGENOM" id="CLU_034311_1_1_1"/>
<dbReference type="OrthoDB" id="2230at5206"/>
<dbReference type="Proteomes" id="UP000010091">
    <property type="component" value="Chromosome 7"/>
</dbReference>
<dbReference type="GO" id="GO:0005737">
    <property type="term" value="C:cytoplasm"/>
    <property type="evidence" value="ECO:0007669"/>
    <property type="project" value="TreeGrafter"/>
</dbReference>
<dbReference type="GO" id="GO:0016020">
    <property type="term" value="C:membrane"/>
    <property type="evidence" value="ECO:0007669"/>
    <property type="project" value="UniProtKB-SubCell"/>
</dbReference>
<dbReference type="GO" id="GO:0008445">
    <property type="term" value="F:D-aspartate oxidase activity"/>
    <property type="evidence" value="ECO:0000250"/>
    <property type="project" value="UniProtKB"/>
</dbReference>
<dbReference type="GO" id="GO:0071949">
    <property type="term" value="F:FAD binding"/>
    <property type="evidence" value="ECO:0007669"/>
    <property type="project" value="InterPro"/>
</dbReference>
<dbReference type="GO" id="GO:0019478">
    <property type="term" value="P:D-amino acid catabolic process"/>
    <property type="evidence" value="ECO:0000250"/>
    <property type="project" value="UniProtKB"/>
</dbReference>
<dbReference type="Gene3D" id="3.30.9.10">
    <property type="entry name" value="D-Amino Acid Oxidase, subunit A, domain 2"/>
    <property type="match status" value="1"/>
</dbReference>
<dbReference type="Gene3D" id="3.40.50.720">
    <property type="entry name" value="NAD(P)-binding Rossmann-like Domain"/>
    <property type="match status" value="1"/>
</dbReference>
<dbReference type="InterPro" id="IPR023209">
    <property type="entry name" value="DAO"/>
</dbReference>
<dbReference type="InterPro" id="IPR006076">
    <property type="entry name" value="FAD-dep_OxRdtase"/>
</dbReference>
<dbReference type="PANTHER" id="PTHR11530">
    <property type="entry name" value="D-AMINO ACID OXIDASE"/>
    <property type="match status" value="1"/>
</dbReference>
<dbReference type="PANTHER" id="PTHR11530:SF11">
    <property type="entry name" value="D-ASPARTATE OXIDASE"/>
    <property type="match status" value="1"/>
</dbReference>
<dbReference type="Pfam" id="PF01266">
    <property type="entry name" value="DAO"/>
    <property type="match status" value="1"/>
</dbReference>
<dbReference type="PIRSF" id="PIRSF000189">
    <property type="entry name" value="D-aa_oxidase"/>
    <property type="match status" value="1"/>
</dbReference>
<dbReference type="SUPFAM" id="SSF54373">
    <property type="entry name" value="FAD-linked reductases, C-terminal domain"/>
    <property type="match status" value="1"/>
</dbReference>
<dbReference type="SUPFAM" id="SSF51971">
    <property type="entry name" value="Nucleotide-binding domain"/>
    <property type="match status" value="1"/>
</dbReference>
<sequence>MSPPLDSSRPVVVIGAGIIGLTTVVCLLESQYYKQYHPPIHIIADYLPNDPLDAKYASTIAGAHHLSFADDGDGRQRNWDLKTFQVMYEQWRQFGEDSGLMALKQTELFVGQMDHLKIYEEHPNFMTLPASMLPPAIDHAVSFTSLTITPSVYLNRLLKQISSLSNGQVKLHRFHLPSLSFLSHPSIKALIGHEPTAGVIVCVGLGALVLGGVNDSLMYPTRGQVVKVRAPWVRSGYTRQIGSLNGGEGGERTYVIPRANGEIILGGTREEGDWYPYPREATTKDILRRAMEICPSLCPANLVAQPLSGTDDRSSTFSSNEQSPSYENPLDSLVIDSLVGFRPSRKGGIRLERGPDLDENTVVIYNYGHGGAGWQSSWGTAEEAVALFCKATRN</sequence>
<reference evidence="11" key="1">
    <citation type="journal article" date="2014" name="PLoS Genet.">
        <title>Analysis of the genome and transcriptome of Cryptococcus neoformans var. grubii reveals complex RNA expression and microevolution leading to virulence attenuation.</title>
        <authorList>
            <person name="Janbon G."/>
            <person name="Ormerod K.L."/>
            <person name="Paulet D."/>
            <person name="Byrnes E.J. III"/>
            <person name="Yadav V."/>
            <person name="Chatterjee G."/>
            <person name="Mullapudi N."/>
            <person name="Hon C.-C."/>
            <person name="Billmyre R.B."/>
            <person name="Brunel F."/>
            <person name="Bahn Y.-S."/>
            <person name="Chen W."/>
            <person name="Chen Y."/>
            <person name="Chow E.W.L."/>
            <person name="Coppee J.-Y."/>
            <person name="Floyd-Averette A."/>
            <person name="Gaillardin C."/>
            <person name="Gerik K.J."/>
            <person name="Goldberg J."/>
            <person name="Gonzalez-Hilarion S."/>
            <person name="Gujja S."/>
            <person name="Hamlin J.L."/>
            <person name="Hsueh Y.-P."/>
            <person name="Ianiri G."/>
            <person name="Jones S."/>
            <person name="Kodira C.D."/>
            <person name="Kozubowski L."/>
            <person name="Lam W."/>
            <person name="Marra M."/>
            <person name="Mesner L.D."/>
            <person name="Mieczkowski P.A."/>
            <person name="Moyrand F."/>
            <person name="Nielsen K."/>
            <person name="Proux C."/>
            <person name="Rossignol T."/>
            <person name="Schein J.E."/>
            <person name="Sun S."/>
            <person name="Wollschlaeger C."/>
            <person name="Wood I.A."/>
            <person name="Zeng Q."/>
            <person name="Neuveglise C."/>
            <person name="Newlon C.S."/>
            <person name="Perfect J.R."/>
            <person name="Lodge J.K."/>
            <person name="Idnurm A."/>
            <person name="Stajich J.E."/>
            <person name="Kronstad J.W."/>
            <person name="Sanyal K."/>
            <person name="Heitman J."/>
            <person name="Fraser J.A."/>
            <person name="Cuomo C.A."/>
            <person name="Dietrich F.S."/>
        </authorList>
    </citation>
    <scope>NUCLEOTIDE SEQUENCE [LARGE SCALE GENOMIC DNA]</scope>
    <source>
        <strain evidence="11">H99 / ATCC 208821 / CBS 10515 / FGSC 9487</strain>
    </source>
</reference>
<reference evidence="8" key="2">
    <citation type="journal article" date="2015" name="PLoS ONE">
        <title>Differences between Cryptococcus neoformans and Cryptococcus gattii in the Molecular Mechanisms Governing Utilization of D-Amino Acids as the Sole Nitrogen Source.</title>
        <authorList>
            <person name="Chang Y.C."/>
            <person name="Khanal Lamichhane A."/>
            <person name="Bradley J."/>
            <person name="Rodgers L."/>
            <person name="Ngamskulrungroj P."/>
            <person name="Kwon-Chung K.J."/>
        </authorList>
    </citation>
    <scope>FUNCTION</scope>
    <scope>INDUCTION</scope>
    <scope>DISRUPTION PHENOTYPE</scope>
</reference>
<gene>
    <name evidence="7" type="primary">DAO1</name>
    <name evidence="10" type="ORF">CNAG_05802</name>
</gene>
<name>OXDD_CRYNH</name>
<feature type="chain" id="PRO_0000460034" description="D-aspartate oxidase">
    <location>
        <begin position="1"/>
        <end position="394"/>
    </location>
</feature>
<feature type="transmembrane region" description="Helical" evidence="4">
    <location>
        <begin position="190"/>
        <end position="210"/>
    </location>
</feature>
<feature type="binding site" evidence="2">
    <location>
        <position position="19"/>
    </location>
    <ligand>
        <name>FAD</name>
        <dbReference type="ChEBI" id="CHEBI:57692"/>
    </ligand>
</feature>
<feature type="binding site" evidence="2">
    <location>
        <position position="57"/>
    </location>
    <ligand>
        <name>FAD</name>
        <dbReference type="ChEBI" id="CHEBI:57692"/>
    </ligand>
</feature>
<feature type="binding site" evidence="2">
    <location>
        <position position="58"/>
    </location>
    <ligand>
        <name>FAD</name>
        <dbReference type="ChEBI" id="CHEBI:57692"/>
    </ligand>
</feature>
<feature type="binding site" evidence="2">
    <location>
        <position position="62"/>
    </location>
    <ligand>
        <name>FAD</name>
        <dbReference type="ChEBI" id="CHEBI:57692"/>
    </ligand>
</feature>
<feature type="binding site" evidence="2">
    <location>
        <position position="342"/>
    </location>
    <ligand>
        <name>FAD</name>
        <dbReference type="ChEBI" id="CHEBI:57692"/>
    </ligand>
</feature>
<feature type="binding site" evidence="2">
    <location>
        <position position="373"/>
    </location>
    <ligand>
        <name>FAD</name>
        <dbReference type="ChEBI" id="CHEBI:57692"/>
    </ligand>
</feature>
<feature type="binding site" evidence="2">
    <location>
        <position position="375"/>
    </location>
    <ligand>
        <name>FAD</name>
        <dbReference type="ChEBI" id="CHEBI:57692"/>
    </ligand>
</feature>
<feature type="glycosylation site" description="N-linked (GlcNAc...) asparagine" evidence="5">
    <location>
        <position position="214"/>
    </location>
</feature>
<proteinExistence type="evidence at transcript level"/>
<organism evidence="11">
    <name type="scientific">Cryptococcus neoformans var. grubii serotype A (strain H99 / ATCC 208821 / CBS 10515 / FGSC 9487)</name>
    <name type="common">Filobasidiella neoformans var. grubii</name>
    <dbReference type="NCBI Taxonomy" id="235443"/>
    <lineage>
        <taxon>Eukaryota</taxon>
        <taxon>Fungi</taxon>
        <taxon>Dikarya</taxon>
        <taxon>Basidiomycota</taxon>
        <taxon>Agaricomycotina</taxon>
        <taxon>Tremellomycetes</taxon>
        <taxon>Tremellales</taxon>
        <taxon>Cryptococcaceae</taxon>
        <taxon>Cryptococcus</taxon>
        <taxon>Cryptococcus neoformans species complex</taxon>
    </lineage>
</organism>
<evidence type="ECO:0000250" key="1">
    <source>
        <dbReference type="UniProtKB" id="C0HMB1"/>
    </source>
</evidence>
<evidence type="ECO:0000250" key="2">
    <source>
        <dbReference type="UniProtKB" id="P80324"/>
    </source>
</evidence>
<evidence type="ECO:0000250" key="3">
    <source>
        <dbReference type="UniProtKB" id="Q75WF1"/>
    </source>
</evidence>
<evidence type="ECO:0000255" key="4"/>
<evidence type="ECO:0000255" key="5">
    <source>
        <dbReference type="PROSITE-ProRule" id="PRU00498"/>
    </source>
</evidence>
<evidence type="ECO:0000269" key="6">
    <source>
    </source>
</evidence>
<evidence type="ECO:0000303" key="7">
    <source>
    </source>
</evidence>
<evidence type="ECO:0000305" key="8"/>
<evidence type="ECO:0000305" key="9">
    <source>
    </source>
</evidence>
<evidence type="ECO:0000312" key="10">
    <source>
        <dbReference type="EMBL" id="AFR96121.1"/>
    </source>
</evidence>
<evidence type="ECO:0000312" key="11">
    <source>
        <dbReference type="Proteomes" id="UP000010091"/>
    </source>
</evidence>